<gene>
    <name evidence="1" type="primary">ppnP</name>
    <name type="ordered locus">VC_A0970</name>
</gene>
<name>PPNP_VIBCH</name>
<keyword id="KW-0002">3D-structure</keyword>
<keyword id="KW-0328">Glycosyltransferase</keyword>
<keyword id="KW-1185">Reference proteome</keyword>
<keyword id="KW-0808">Transferase</keyword>
<proteinExistence type="evidence at protein level"/>
<reference key="1">
    <citation type="journal article" date="2000" name="Nature">
        <title>DNA sequence of both chromosomes of the cholera pathogen Vibrio cholerae.</title>
        <authorList>
            <person name="Heidelberg J.F."/>
            <person name="Eisen J.A."/>
            <person name="Nelson W.C."/>
            <person name="Clayton R.A."/>
            <person name="Gwinn M.L."/>
            <person name="Dodson R.J."/>
            <person name="Haft D.H."/>
            <person name="Hickey E.K."/>
            <person name="Peterson J.D."/>
            <person name="Umayam L.A."/>
            <person name="Gill S.R."/>
            <person name="Nelson K.E."/>
            <person name="Read T.D."/>
            <person name="Tettelin H."/>
            <person name="Richardson D.L."/>
            <person name="Ermolaeva M.D."/>
            <person name="Vamathevan J.J."/>
            <person name="Bass S."/>
            <person name="Qin H."/>
            <person name="Dragoi I."/>
            <person name="Sellers P."/>
            <person name="McDonald L.A."/>
            <person name="Utterback T.R."/>
            <person name="Fleischmann R.D."/>
            <person name="Nierman W.C."/>
            <person name="White O."/>
            <person name="Salzberg S.L."/>
            <person name="Smith H.O."/>
            <person name="Colwell R.R."/>
            <person name="Mekalanos J.J."/>
            <person name="Venter J.C."/>
            <person name="Fraser C.M."/>
        </authorList>
    </citation>
    <scope>NUCLEOTIDE SEQUENCE [LARGE SCALE GENOMIC DNA]</scope>
    <source>
        <strain>ATCC 39315 / El Tor Inaba N16961</strain>
    </source>
</reference>
<protein>
    <recommendedName>
        <fullName evidence="1">Pyrimidine/purine nucleoside phosphorylase</fullName>
        <ecNumber evidence="1">2.4.2.1</ecNumber>
        <ecNumber evidence="1">2.4.2.2</ecNumber>
    </recommendedName>
    <alternativeName>
        <fullName evidence="1">Adenosine phosphorylase</fullName>
    </alternativeName>
    <alternativeName>
        <fullName evidence="1">Cytidine phosphorylase</fullName>
    </alternativeName>
    <alternativeName>
        <fullName evidence="1">Guanosine phosphorylase</fullName>
    </alternativeName>
    <alternativeName>
        <fullName evidence="1">Inosine phosphorylase</fullName>
    </alternativeName>
    <alternativeName>
        <fullName evidence="1">Thymidine phosphorylase</fullName>
    </alternativeName>
    <alternativeName>
        <fullName evidence="1">Uridine phosphorylase</fullName>
    </alternativeName>
    <alternativeName>
        <fullName evidence="1">Xanthosine phosphorylase</fullName>
    </alternativeName>
</protein>
<feature type="chain" id="PRO_0000211784" description="Pyrimidine/purine nucleoside phosphorylase">
    <location>
        <begin position="1"/>
        <end position="95"/>
    </location>
</feature>
<feature type="strand" evidence="3">
    <location>
        <begin position="2"/>
        <end position="7"/>
    </location>
</feature>
<feature type="helix" evidence="3">
    <location>
        <begin position="8"/>
        <end position="10"/>
    </location>
</feature>
<feature type="strand" evidence="3">
    <location>
        <begin position="12"/>
        <end position="19"/>
    </location>
</feature>
<feature type="strand" evidence="3">
    <location>
        <begin position="22"/>
        <end position="29"/>
    </location>
</feature>
<feature type="strand" evidence="3">
    <location>
        <begin position="31"/>
        <end position="37"/>
    </location>
</feature>
<feature type="strand" evidence="3">
    <location>
        <begin position="42"/>
        <end position="54"/>
    </location>
</feature>
<feature type="strand" evidence="3">
    <location>
        <begin position="62"/>
        <end position="65"/>
    </location>
</feature>
<feature type="strand" evidence="3">
    <location>
        <begin position="69"/>
        <end position="72"/>
    </location>
</feature>
<feature type="strand" evidence="3">
    <location>
        <begin position="77"/>
        <end position="84"/>
    </location>
</feature>
<feature type="strand" evidence="3">
    <location>
        <begin position="86"/>
        <end position="92"/>
    </location>
</feature>
<sequence length="95" mass="10180">MIKENVYFDGNVKSLGFSQQDGESTVGVMAPGQYTFGTGAPERMTVVKGALTIKRVTDADWVTFTAGEAFEVAGNSSFDLQVEVATAYLCEFLPA</sequence>
<accession>Q9KKY0</accession>
<evidence type="ECO:0000255" key="1">
    <source>
        <dbReference type="HAMAP-Rule" id="MF_01537"/>
    </source>
</evidence>
<evidence type="ECO:0000305" key="2"/>
<evidence type="ECO:0007829" key="3">
    <source>
        <dbReference type="PDB" id="7EYM"/>
    </source>
</evidence>
<comment type="function">
    <text evidence="1">Catalyzes the phosphorolysis of diverse nucleosides, yielding D-ribose 1-phosphate and the respective free bases. Can use uridine, adenosine, guanosine, cytidine, thymidine, inosine and xanthosine as substrates. Also catalyzes the reverse reactions.</text>
</comment>
<comment type="catalytic activity">
    <reaction evidence="1">
        <text>a purine D-ribonucleoside + phosphate = a purine nucleobase + alpha-D-ribose 1-phosphate</text>
        <dbReference type="Rhea" id="RHEA:19805"/>
        <dbReference type="ChEBI" id="CHEBI:26386"/>
        <dbReference type="ChEBI" id="CHEBI:43474"/>
        <dbReference type="ChEBI" id="CHEBI:57720"/>
        <dbReference type="ChEBI" id="CHEBI:142355"/>
        <dbReference type="EC" id="2.4.2.1"/>
    </reaction>
</comment>
<comment type="catalytic activity">
    <reaction evidence="1">
        <text>adenosine + phosphate = alpha-D-ribose 1-phosphate + adenine</text>
        <dbReference type="Rhea" id="RHEA:27642"/>
        <dbReference type="ChEBI" id="CHEBI:16335"/>
        <dbReference type="ChEBI" id="CHEBI:16708"/>
        <dbReference type="ChEBI" id="CHEBI:43474"/>
        <dbReference type="ChEBI" id="CHEBI:57720"/>
        <dbReference type="EC" id="2.4.2.1"/>
    </reaction>
</comment>
<comment type="catalytic activity">
    <reaction evidence="1">
        <text>cytidine + phosphate = cytosine + alpha-D-ribose 1-phosphate</text>
        <dbReference type="Rhea" id="RHEA:52540"/>
        <dbReference type="ChEBI" id="CHEBI:16040"/>
        <dbReference type="ChEBI" id="CHEBI:17562"/>
        <dbReference type="ChEBI" id="CHEBI:43474"/>
        <dbReference type="ChEBI" id="CHEBI:57720"/>
        <dbReference type="EC" id="2.4.2.2"/>
    </reaction>
</comment>
<comment type="catalytic activity">
    <reaction evidence="1">
        <text>guanosine + phosphate = alpha-D-ribose 1-phosphate + guanine</text>
        <dbReference type="Rhea" id="RHEA:13233"/>
        <dbReference type="ChEBI" id="CHEBI:16235"/>
        <dbReference type="ChEBI" id="CHEBI:16750"/>
        <dbReference type="ChEBI" id="CHEBI:43474"/>
        <dbReference type="ChEBI" id="CHEBI:57720"/>
        <dbReference type="EC" id="2.4.2.1"/>
    </reaction>
</comment>
<comment type="catalytic activity">
    <reaction evidence="1">
        <text>inosine + phosphate = alpha-D-ribose 1-phosphate + hypoxanthine</text>
        <dbReference type="Rhea" id="RHEA:27646"/>
        <dbReference type="ChEBI" id="CHEBI:17368"/>
        <dbReference type="ChEBI" id="CHEBI:17596"/>
        <dbReference type="ChEBI" id="CHEBI:43474"/>
        <dbReference type="ChEBI" id="CHEBI:57720"/>
        <dbReference type="EC" id="2.4.2.1"/>
    </reaction>
</comment>
<comment type="catalytic activity">
    <reaction evidence="1">
        <text>thymidine + phosphate = 2-deoxy-alpha-D-ribose 1-phosphate + thymine</text>
        <dbReference type="Rhea" id="RHEA:16037"/>
        <dbReference type="ChEBI" id="CHEBI:17748"/>
        <dbReference type="ChEBI" id="CHEBI:17821"/>
        <dbReference type="ChEBI" id="CHEBI:43474"/>
        <dbReference type="ChEBI" id="CHEBI:57259"/>
        <dbReference type="EC" id="2.4.2.2"/>
    </reaction>
</comment>
<comment type="catalytic activity">
    <reaction evidence="1">
        <text>uridine + phosphate = alpha-D-ribose 1-phosphate + uracil</text>
        <dbReference type="Rhea" id="RHEA:24388"/>
        <dbReference type="ChEBI" id="CHEBI:16704"/>
        <dbReference type="ChEBI" id="CHEBI:17568"/>
        <dbReference type="ChEBI" id="CHEBI:43474"/>
        <dbReference type="ChEBI" id="CHEBI:57720"/>
        <dbReference type="EC" id="2.4.2.2"/>
    </reaction>
</comment>
<comment type="catalytic activity">
    <reaction evidence="1">
        <text>xanthosine + phosphate = alpha-D-ribose 1-phosphate + xanthine</text>
        <dbReference type="Rhea" id="RHEA:27638"/>
        <dbReference type="ChEBI" id="CHEBI:17712"/>
        <dbReference type="ChEBI" id="CHEBI:18107"/>
        <dbReference type="ChEBI" id="CHEBI:43474"/>
        <dbReference type="ChEBI" id="CHEBI:57720"/>
        <dbReference type="EC" id="2.4.2.1"/>
    </reaction>
</comment>
<comment type="similarity">
    <text evidence="1">Belongs to the nucleoside phosphorylase PpnP family.</text>
</comment>
<comment type="sequence caution" evidence="2">
    <conflict type="erroneous initiation">
        <sequence resource="EMBL-CDS" id="AAF96866"/>
    </conflict>
</comment>
<organism>
    <name type="scientific">Vibrio cholerae serotype O1 (strain ATCC 39315 / El Tor Inaba N16961)</name>
    <dbReference type="NCBI Taxonomy" id="243277"/>
    <lineage>
        <taxon>Bacteria</taxon>
        <taxon>Pseudomonadati</taxon>
        <taxon>Pseudomonadota</taxon>
        <taxon>Gammaproteobacteria</taxon>
        <taxon>Vibrionales</taxon>
        <taxon>Vibrionaceae</taxon>
        <taxon>Vibrio</taxon>
    </lineage>
</organism>
<dbReference type="EC" id="2.4.2.1" evidence="1"/>
<dbReference type="EC" id="2.4.2.2" evidence="1"/>
<dbReference type="EMBL" id="AE003853">
    <property type="protein sequence ID" value="AAF96866.1"/>
    <property type="status" value="ALT_INIT"/>
    <property type="molecule type" value="Genomic_DNA"/>
</dbReference>
<dbReference type="PIR" id="A82395">
    <property type="entry name" value="A82395"/>
</dbReference>
<dbReference type="RefSeq" id="NP_233354.1">
    <property type="nucleotide sequence ID" value="NC_002506.1"/>
</dbReference>
<dbReference type="RefSeq" id="WP_000588948.1">
    <property type="nucleotide sequence ID" value="NZ_LT906615.1"/>
</dbReference>
<dbReference type="PDB" id="7EYM">
    <property type="method" value="X-ray"/>
    <property type="resolution" value="1.38 A"/>
    <property type="chains" value="A/B=1-95"/>
</dbReference>
<dbReference type="PDBsum" id="7EYM"/>
<dbReference type="SMR" id="Q9KKY0"/>
<dbReference type="STRING" id="243277.VC_A0970"/>
<dbReference type="DNASU" id="2612655"/>
<dbReference type="EnsemblBacteria" id="AAF96866">
    <property type="protein sequence ID" value="AAF96866"/>
    <property type="gene ID" value="VC_A0970"/>
</dbReference>
<dbReference type="KEGG" id="vch:VC_A0970"/>
<dbReference type="PATRIC" id="fig|243277.26.peg.3578"/>
<dbReference type="eggNOG" id="COG3123">
    <property type="taxonomic scope" value="Bacteria"/>
</dbReference>
<dbReference type="HOGENOM" id="CLU_157874_0_0_6"/>
<dbReference type="Proteomes" id="UP000000584">
    <property type="component" value="Chromosome 2"/>
</dbReference>
<dbReference type="GO" id="GO:0005829">
    <property type="term" value="C:cytosol"/>
    <property type="evidence" value="ECO:0000318"/>
    <property type="project" value="GO_Central"/>
</dbReference>
<dbReference type="GO" id="GO:0047975">
    <property type="term" value="F:guanosine phosphorylase activity"/>
    <property type="evidence" value="ECO:0007669"/>
    <property type="project" value="UniProtKB-EC"/>
</dbReference>
<dbReference type="GO" id="GO:0004731">
    <property type="term" value="F:purine-nucleoside phosphorylase activity"/>
    <property type="evidence" value="ECO:0000318"/>
    <property type="project" value="GO_Central"/>
</dbReference>
<dbReference type="GO" id="GO:0016154">
    <property type="term" value="F:pyrimidine-nucleoside phosphorylase activity"/>
    <property type="evidence" value="ECO:0000318"/>
    <property type="project" value="GO_Central"/>
</dbReference>
<dbReference type="GO" id="GO:0009032">
    <property type="term" value="F:thymidine phosphorylase activity"/>
    <property type="evidence" value="ECO:0007669"/>
    <property type="project" value="UniProtKB-EC"/>
</dbReference>
<dbReference type="GO" id="GO:0004850">
    <property type="term" value="F:uridine phosphorylase activity"/>
    <property type="evidence" value="ECO:0007669"/>
    <property type="project" value="UniProtKB-EC"/>
</dbReference>
<dbReference type="CDD" id="cd20296">
    <property type="entry name" value="cupin_PpnP-like"/>
    <property type="match status" value="1"/>
</dbReference>
<dbReference type="FunFam" id="2.60.120.10:FF:000016">
    <property type="entry name" value="Pyrimidine/purine nucleoside phosphorylase"/>
    <property type="match status" value="1"/>
</dbReference>
<dbReference type="Gene3D" id="2.60.120.10">
    <property type="entry name" value="Jelly Rolls"/>
    <property type="match status" value="1"/>
</dbReference>
<dbReference type="HAMAP" id="MF_01537">
    <property type="entry name" value="Nucleos_phosphorylase_PpnP"/>
    <property type="match status" value="1"/>
</dbReference>
<dbReference type="InterPro" id="IPR009664">
    <property type="entry name" value="Ppnp"/>
</dbReference>
<dbReference type="InterPro" id="IPR014710">
    <property type="entry name" value="RmlC-like_jellyroll"/>
</dbReference>
<dbReference type="InterPro" id="IPR011051">
    <property type="entry name" value="RmlC_Cupin_sf"/>
</dbReference>
<dbReference type="PANTHER" id="PTHR36540">
    <property type="entry name" value="PYRIMIDINE/PURINE NUCLEOSIDE PHOSPHORYLASE"/>
    <property type="match status" value="1"/>
</dbReference>
<dbReference type="PANTHER" id="PTHR36540:SF1">
    <property type="entry name" value="PYRIMIDINE_PURINE NUCLEOSIDE PHOSPHORYLASE"/>
    <property type="match status" value="1"/>
</dbReference>
<dbReference type="Pfam" id="PF06865">
    <property type="entry name" value="Ppnp"/>
    <property type="match status" value="1"/>
</dbReference>
<dbReference type="SUPFAM" id="SSF51182">
    <property type="entry name" value="RmlC-like cupins"/>
    <property type="match status" value="1"/>
</dbReference>